<organism>
    <name type="scientific">Bacillus cereus (strain B4264)</name>
    <dbReference type="NCBI Taxonomy" id="405532"/>
    <lineage>
        <taxon>Bacteria</taxon>
        <taxon>Bacillati</taxon>
        <taxon>Bacillota</taxon>
        <taxon>Bacilli</taxon>
        <taxon>Bacillales</taxon>
        <taxon>Bacillaceae</taxon>
        <taxon>Bacillus</taxon>
        <taxon>Bacillus cereus group</taxon>
    </lineage>
</organism>
<gene>
    <name evidence="1" type="primary">tgt</name>
    <name type="ordered locus">BCB4264_A4536</name>
</gene>
<accession>B7HE51</accession>
<comment type="function">
    <text evidence="1">Catalyzes the base-exchange of a guanine (G) residue with the queuine precursor 7-aminomethyl-7-deazaguanine (PreQ1) at position 34 (anticodon wobble position) in tRNAs with GU(N) anticodons (tRNA-Asp, -Asn, -His and -Tyr). Catalysis occurs through a double-displacement mechanism. The nucleophile active site attacks the C1' of nucleotide 34 to detach the guanine base from the RNA, forming a covalent enzyme-RNA intermediate. The proton acceptor active site deprotonates the incoming PreQ1, allowing a nucleophilic attack on the C1' of the ribose to form the product. After dissociation, two additional enzymatic reactions on the tRNA convert PreQ1 to queuine (Q), resulting in the hypermodified nucleoside queuosine (7-(((4,5-cis-dihydroxy-2-cyclopenten-1-yl)amino)methyl)-7-deazaguanosine).</text>
</comment>
<comment type="catalytic activity">
    <reaction evidence="1">
        <text>7-aminomethyl-7-carbaguanine + guanosine(34) in tRNA = 7-aminomethyl-7-carbaguanosine(34) in tRNA + guanine</text>
        <dbReference type="Rhea" id="RHEA:24104"/>
        <dbReference type="Rhea" id="RHEA-COMP:10341"/>
        <dbReference type="Rhea" id="RHEA-COMP:10342"/>
        <dbReference type="ChEBI" id="CHEBI:16235"/>
        <dbReference type="ChEBI" id="CHEBI:58703"/>
        <dbReference type="ChEBI" id="CHEBI:74269"/>
        <dbReference type="ChEBI" id="CHEBI:82833"/>
        <dbReference type="EC" id="2.4.2.29"/>
    </reaction>
</comment>
<comment type="cofactor">
    <cofactor evidence="1">
        <name>Zn(2+)</name>
        <dbReference type="ChEBI" id="CHEBI:29105"/>
    </cofactor>
    <text evidence="1">Binds 1 zinc ion per subunit.</text>
</comment>
<comment type="pathway">
    <text evidence="1">tRNA modification; tRNA-queuosine biosynthesis.</text>
</comment>
<comment type="subunit">
    <text evidence="1">Homodimer. Within each dimer, one monomer is responsible for RNA recognition and catalysis, while the other monomer binds to the replacement base PreQ1.</text>
</comment>
<comment type="similarity">
    <text evidence="1">Belongs to the queuine tRNA-ribosyltransferase family.</text>
</comment>
<keyword id="KW-0328">Glycosyltransferase</keyword>
<keyword id="KW-0479">Metal-binding</keyword>
<keyword id="KW-0671">Queuosine biosynthesis</keyword>
<keyword id="KW-0808">Transferase</keyword>
<keyword id="KW-0819">tRNA processing</keyword>
<keyword id="KW-0862">Zinc</keyword>
<sequence>MTAIRYEFIKTCKQTGARLGRVHTPHGSFDTPTFMPVGTLATVKTMSPEELKAMDSGIILSNTYHLWLRPGHEIIREAGGLHKFMNWDRAILTDSGGFQVFSLSDFRRIEEEGVHFRNHLNGDKLFLSPEKAMEIQNALGSDIMMAFDECPPFPATFEYMKKSVERTSRWAERCLKAHERPQDQGLFGIVQGGEYEELRRQSAKDLVSMDFPGYAVGGLSVGEPKDIMNRVLEFTTPLLPDNKPRYLMGVGSPDSLIDGAIRGIDMFDCVLPTRIARNGTCMTSEGRLVVKNAKFARDFGPLDPNCDCYTCKNYSRAYIRHLMKCDETFGIRLTSYHNLHFLLNLMEQVRQAIREDRLGDFREEFFEQYGFNKPNAKNF</sequence>
<name>TGT_BACC4</name>
<reference key="1">
    <citation type="submission" date="2008-10" db="EMBL/GenBank/DDBJ databases">
        <title>Genome sequence of Bacillus cereus B4264.</title>
        <authorList>
            <person name="Dodson R.J."/>
            <person name="Durkin A.S."/>
            <person name="Rosovitz M.J."/>
            <person name="Rasko D.A."/>
            <person name="Hoffmaster A."/>
            <person name="Ravel J."/>
            <person name="Sutton G."/>
        </authorList>
    </citation>
    <scope>NUCLEOTIDE SEQUENCE [LARGE SCALE GENOMIC DNA]</scope>
    <source>
        <strain>B4264</strain>
    </source>
</reference>
<dbReference type="EC" id="2.4.2.29" evidence="1"/>
<dbReference type="EMBL" id="CP001176">
    <property type="protein sequence ID" value="ACK63065.1"/>
    <property type="molecule type" value="Genomic_DNA"/>
</dbReference>
<dbReference type="RefSeq" id="WP_000125365.1">
    <property type="nucleotide sequence ID" value="NZ_VEHB01000006.1"/>
</dbReference>
<dbReference type="SMR" id="B7HE51"/>
<dbReference type="GeneID" id="72451095"/>
<dbReference type="KEGG" id="bcb:BCB4264_A4536"/>
<dbReference type="HOGENOM" id="CLU_022060_0_1_9"/>
<dbReference type="UniPathway" id="UPA00392"/>
<dbReference type="Proteomes" id="UP000007096">
    <property type="component" value="Chromosome"/>
</dbReference>
<dbReference type="GO" id="GO:0005829">
    <property type="term" value="C:cytosol"/>
    <property type="evidence" value="ECO:0007669"/>
    <property type="project" value="TreeGrafter"/>
</dbReference>
<dbReference type="GO" id="GO:0046872">
    <property type="term" value="F:metal ion binding"/>
    <property type="evidence" value="ECO:0007669"/>
    <property type="project" value="UniProtKB-KW"/>
</dbReference>
<dbReference type="GO" id="GO:0008479">
    <property type="term" value="F:tRNA-guanosine(34) queuine transglycosylase activity"/>
    <property type="evidence" value="ECO:0007669"/>
    <property type="project" value="UniProtKB-UniRule"/>
</dbReference>
<dbReference type="GO" id="GO:0008616">
    <property type="term" value="P:queuosine biosynthetic process"/>
    <property type="evidence" value="ECO:0007669"/>
    <property type="project" value="UniProtKB-UniRule"/>
</dbReference>
<dbReference type="GO" id="GO:0002099">
    <property type="term" value="P:tRNA wobble guanine modification"/>
    <property type="evidence" value="ECO:0007669"/>
    <property type="project" value="TreeGrafter"/>
</dbReference>
<dbReference type="GO" id="GO:0101030">
    <property type="term" value="P:tRNA-guanine transglycosylation"/>
    <property type="evidence" value="ECO:0007669"/>
    <property type="project" value="InterPro"/>
</dbReference>
<dbReference type="FunFam" id="3.20.20.105:FF:000001">
    <property type="entry name" value="Queuine tRNA-ribosyltransferase"/>
    <property type="match status" value="1"/>
</dbReference>
<dbReference type="Gene3D" id="3.20.20.105">
    <property type="entry name" value="Queuine tRNA-ribosyltransferase-like"/>
    <property type="match status" value="1"/>
</dbReference>
<dbReference type="HAMAP" id="MF_00168">
    <property type="entry name" value="Q_tRNA_Tgt"/>
    <property type="match status" value="1"/>
</dbReference>
<dbReference type="InterPro" id="IPR050076">
    <property type="entry name" value="ArchSynthase1/Queuine_TRR"/>
</dbReference>
<dbReference type="InterPro" id="IPR004803">
    <property type="entry name" value="TGT"/>
</dbReference>
<dbReference type="InterPro" id="IPR036511">
    <property type="entry name" value="TGT-like_sf"/>
</dbReference>
<dbReference type="InterPro" id="IPR002616">
    <property type="entry name" value="tRNA_ribo_trans-like"/>
</dbReference>
<dbReference type="NCBIfam" id="TIGR00430">
    <property type="entry name" value="Q_tRNA_tgt"/>
    <property type="match status" value="1"/>
</dbReference>
<dbReference type="NCBIfam" id="TIGR00449">
    <property type="entry name" value="tgt_general"/>
    <property type="match status" value="1"/>
</dbReference>
<dbReference type="PANTHER" id="PTHR46499">
    <property type="entry name" value="QUEUINE TRNA-RIBOSYLTRANSFERASE"/>
    <property type="match status" value="1"/>
</dbReference>
<dbReference type="PANTHER" id="PTHR46499:SF1">
    <property type="entry name" value="QUEUINE TRNA-RIBOSYLTRANSFERASE"/>
    <property type="match status" value="1"/>
</dbReference>
<dbReference type="Pfam" id="PF01702">
    <property type="entry name" value="TGT"/>
    <property type="match status" value="1"/>
</dbReference>
<dbReference type="SUPFAM" id="SSF51713">
    <property type="entry name" value="tRNA-guanine transglycosylase"/>
    <property type="match status" value="1"/>
</dbReference>
<feature type="chain" id="PRO_1000197982" description="Queuine tRNA-ribosyltransferase">
    <location>
        <begin position="1"/>
        <end position="379"/>
    </location>
</feature>
<feature type="region of interest" description="RNA binding" evidence="1">
    <location>
        <begin position="249"/>
        <end position="255"/>
    </location>
</feature>
<feature type="region of interest" description="RNA binding; important for wobble base 34 recognition" evidence="1">
    <location>
        <begin position="273"/>
        <end position="277"/>
    </location>
</feature>
<feature type="active site" description="Proton acceptor" evidence="1">
    <location>
        <position position="94"/>
    </location>
</feature>
<feature type="active site" description="Nucleophile" evidence="1">
    <location>
        <position position="268"/>
    </location>
</feature>
<feature type="binding site" evidence="1">
    <location>
        <begin position="94"/>
        <end position="98"/>
    </location>
    <ligand>
        <name>substrate</name>
    </ligand>
</feature>
<feature type="binding site" evidence="1">
    <location>
        <position position="148"/>
    </location>
    <ligand>
        <name>substrate</name>
    </ligand>
</feature>
<feature type="binding site" evidence="1">
    <location>
        <position position="191"/>
    </location>
    <ligand>
        <name>substrate</name>
    </ligand>
</feature>
<feature type="binding site" evidence="1">
    <location>
        <position position="218"/>
    </location>
    <ligand>
        <name>substrate</name>
    </ligand>
</feature>
<feature type="binding site" evidence="1">
    <location>
        <position position="306"/>
    </location>
    <ligand>
        <name>Zn(2+)</name>
        <dbReference type="ChEBI" id="CHEBI:29105"/>
    </ligand>
</feature>
<feature type="binding site" evidence="1">
    <location>
        <position position="308"/>
    </location>
    <ligand>
        <name>Zn(2+)</name>
        <dbReference type="ChEBI" id="CHEBI:29105"/>
    </ligand>
</feature>
<feature type="binding site" evidence="1">
    <location>
        <position position="311"/>
    </location>
    <ligand>
        <name>Zn(2+)</name>
        <dbReference type="ChEBI" id="CHEBI:29105"/>
    </ligand>
</feature>
<feature type="binding site" evidence="1">
    <location>
        <position position="337"/>
    </location>
    <ligand>
        <name>Zn(2+)</name>
        <dbReference type="ChEBI" id="CHEBI:29105"/>
    </ligand>
</feature>
<protein>
    <recommendedName>
        <fullName evidence="1">Queuine tRNA-ribosyltransferase</fullName>
        <ecNumber evidence="1">2.4.2.29</ecNumber>
    </recommendedName>
    <alternativeName>
        <fullName evidence="1">Guanine insertion enzyme</fullName>
    </alternativeName>
    <alternativeName>
        <fullName evidence="1">tRNA-guanine transglycosylase</fullName>
    </alternativeName>
</protein>
<proteinExistence type="inferred from homology"/>
<evidence type="ECO:0000255" key="1">
    <source>
        <dbReference type="HAMAP-Rule" id="MF_00168"/>
    </source>
</evidence>